<reference key="1">
    <citation type="submission" date="2004-11" db="EMBL/GenBank/DDBJ databases">
        <authorList>
            <consortium name="The German cDNA consortium"/>
        </authorList>
    </citation>
    <scope>NUCLEOTIDE SEQUENCE [LARGE SCALE MRNA]</scope>
    <source>
        <tissue>Heart</tissue>
    </source>
</reference>
<gene>
    <name evidence="3" type="primary">EIF3E</name>
    <name evidence="3" type="synonym">EIF3S6</name>
    <name type="synonym">EIF3SE</name>
    <name evidence="3" type="synonym">INT6</name>
</gene>
<organism>
    <name type="scientific">Pongo abelii</name>
    <name type="common">Sumatran orangutan</name>
    <name type="synonym">Pongo pygmaeus abelii</name>
    <dbReference type="NCBI Taxonomy" id="9601"/>
    <lineage>
        <taxon>Eukaryota</taxon>
        <taxon>Metazoa</taxon>
        <taxon>Chordata</taxon>
        <taxon>Craniata</taxon>
        <taxon>Vertebrata</taxon>
        <taxon>Euteleostomi</taxon>
        <taxon>Mammalia</taxon>
        <taxon>Eutheria</taxon>
        <taxon>Euarchontoglires</taxon>
        <taxon>Primates</taxon>
        <taxon>Haplorrhini</taxon>
        <taxon>Catarrhini</taxon>
        <taxon>Hominidae</taxon>
        <taxon>Pongo</taxon>
    </lineage>
</organism>
<feature type="initiator methionine" description="Removed" evidence="3">
    <location>
        <position position="1"/>
    </location>
</feature>
<feature type="chain" id="PRO_0000289997" description="Eukaryotic translation initiation factor 3 subunit E">
    <location>
        <begin position="2"/>
        <end position="445"/>
    </location>
</feature>
<feature type="domain" description="PCI" evidence="4">
    <location>
        <begin position="221"/>
        <end position="398"/>
    </location>
</feature>
<feature type="region of interest" description="Sufficient for interaction with EPAS1" evidence="3">
    <location>
        <begin position="4"/>
        <end position="128"/>
    </location>
</feature>
<feature type="region of interest" description="Sufficient for interaction with TRIM27" evidence="3">
    <location>
        <begin position="9"/>
        <end position="195"/>
    </location>
</feature>
<feature type="region of interest" description="Sufficient for interaction with MCM7" evidence="3">
    <location>
        <begin position="351"/>
        <end position="445"/>
    </location>
</feature>
<feature type="modified residue" description="N-acetylalanine" evidence="1 3">
    <location>
        <position position="2"/>
    </location>
</feature>
<feature type="modified residue" description="Phosphoserine" evidence="1">
    <location>
        <position position="399"/>
    </location>
</feature>
<feature type="modified residue" description="Phosphothreonine" evidence="2">
    <location>
        <position position="439"/>
    </location>
</feature>
<feature type="modified residue" description="Phosphoserine" evidence="1">
    <location>
        <position position="442"/>
    </location>
</feature>
<feature type="modified residue" description="Phosphotyrosine" evidence="2">
    <location>
        <position position="445"/>
    </location>
</feature>
<feature type="sequence conflict" description="In Ref. 1; CAH91901." evidence="5" ref="1">
    <original>D</original>
    <variation>G</variation>
    <location>
        <position position="322"/>
    </location>
</feature>
<protein>
    <recommendedName>
        <fullName evidence="3">Eukaryotic translation initiation factor 3 subunit E</fullName>
        <shortName evidence="3">eIF3e</shortName>
    </recommendedName>
    <alternativeName>
        <fullName evidence="3">Eukaryotic translation initiation factor 3 subunit 6</fullName>
    </alternativeName>
    <alternativeName>
        <fullName evidence="3">eIF-3 p48</fullName>
    </alternativeName>
</protein>
<accession>Q5R8K9</accession>
<accession>Q5R6H2</accession>
<proteinExistence type="evidence at transcript level"/>
<dbReference type="EMBL" id="CR859743">
    <property type="protein sequence ID" value="CAH91901.1"/>
    <property type="molecule type" value="mRNA"/>
</dbReference>
<dbReference type="EMBL" id="CR860517">
    <property type="protein sequence ID" value="CAH92644.1"/>
    <property type="molecule type" value="mRNA"/>
</dbReference>
<dbReference type="RefSeq" id="NP_001126100.1">
    <property type="nucleotide sequence ID" value="NM_001132628.1"/>
</dbReference>
<dbReference type="SMR" id="Q5R8K9"/>
<dbReference type="FunCoup" id="Q5R8K9">
    <property type="interactions" value="3568"/>
</dbReference>
<dbReference type="STRING" id="9601.ENSPPYP00000021115"/>
<dbReference type="GeneID" id="100173055"/>
<dbReference type="KEGG" id="pon:100173055"/>
<dbReference type="CTD" id="3646"/>
<dbReference type="eggNOG" id="KOG2758">
    <property type="taxonomic scope" value="Eukaryota"/>
</dbReference>
<dbReference type="HOGENOM" id="CLU_031132_0_1_1"/>
<dbReference type="InParanoid" id="Q5R8K9"/>
<dbReference type="OrthoDB" id="417252at2759"/>
<dbReference type="TreeFam" id="TF101518"/>
<dbReference type="Proteomes" id="UP000001595">
    <property type="component" value="Chromosome 8"/>
</dbReference>
<dbReference type="GO" id="GO:0016282">
    <property type="term" value="C:eukaryotic 43S preinitiation complex"/>
    <property type="evidence" value="ECO:0007669"/>
    <property type="project" value="UniProtKB-UniRule"/>
</dbReference>
<dbReference type="GO" id="GO:0033290">
    <property type="term" value="C:eukaryotic 48S preinitiation complex"/>
    <property type="evidence" value="ECO:0007669"/>
    <property type="project" value="UniProtKB-UniRule"/>
</dbReference>
<dbReference type="GO" id="GO:0005852">
    <property type="term" value="C:eukaryotic translation initiation factor 3 complex"/>
    <property type="evidence" value="ECO:0000250"/>
    <property type="project" value="UniProtKB"/>
</dbReference>
<dbReference type="GO" id="GO:0071540">
    <property type="term" value="C:eukaryotic translation initiation factor 3 complex, eIF3e"/>
    <property type="evidence" value="ECO:0007669"/>
    <property type="project" value="UniProtKB-UniRule"/>
</dbReference>
<dbReference type="GO" id="GO:0016605">
    <property type="term" value="C:PML body"/>
    <property type="evidence" value="ECO:0007669"/>
    <property type="project" value="UniProtKB-SubCell"/>
</dbReference>
<dbReference type="GO" id="GO:0003743">
    <property type="term" value="F:translation initiation factor activity"/>
    <property type="evidence" value="ECO:0007669"/>
    <property type="project" value="UniProtKB-UniRule"/>
</dbReference>
<dbReference type="GO" id="GO:0001732">
    <property type="term" value="P:formation of cytoplasmic translation initiation complex"/>
    <property type="evidence" value="ECO:0007669"/>
    <property type="project" value="UniProtKB-UniRule"/>
</dbReference>
<dbReference type="GO" id="GO:0000184">
    <property type="term" value="P:nuclear-transcribed mRNA catabolic process, nonsense-mediated decay"/>
    <property type="evidence" value="ECO:0000250"/>
    <property type="project" value="UniProtKB"/>
</dbReference>
<dbReference type="GO" id="GO:0006413">
    <property type="term" value="P:translational initiation"/>
    <property type="evidence" value="ECO:0000250"/>
    <property type="project" value="UniProtKB"/>
</dbReference>
<dbReference type="CDD" id="cd21378">
    <property type="entry name" value="eIF3E"/>
    <property type="match status" value="1"/>
</dbReference>
<dbReference type="HAMAP" id="MF_03004">
    <property type="entry name" value="eIF3e"/>
    <property type="match status" value="1"/>
</dbReference>
<dbReference type="InterPro" id="IPR016650">
    <property type="entry name" value="eIF3e"/>
</dbReference>
<dbReference type="InterPro" id="IPR019010">
    <property type="entry name" value="eIF3e_N"/>
</dbReference>
<dbReference type="InterPro" id="IPR000717">
    <property type="entry name" value="PCI_dom"/>
</dbReference>
<dbReference type="InterPro" id="IPR036390">
    <property type="entry name" value="WH_DNA-bd_sf"/>
</dbReference>
<dbReference type="PANTHER" id="PTHR10317">
    <property type="entry name" value="EUKARYOTIC TRANSLATION INITIATION FACTOR 3 SUBUNIT E"/>
    <property type="match status" value="1"/>
</dbReference>
<dbReference type="Pfam" id="PF09440">
    <property type="entry name" value="eIF3_N"/>
    <property type="match status" value="1"/>
</dbReference>
<dbReference type="Pfam" id="PF21357">
    <property type="entry name" value="EIF3E_C"/>
    <property type="match status" value="1"/>
</dbReference>
<dbReference type="Pfam" id="PF01399">
    <property type="entry name" value="PCI"/>
    <property type="match status" value="1"/>
</dbReference>
<dbReference type="PIRSF" id="PIRSF016255">
    <property type="entry name" value="eIF3e_su6"/>
    <property type="match status" value="1"/>
</dbReference>
<dbReference type="SMART" id="SM01186">
    <property type="entry name" value="eIF3_N"/>
    <property type="match status" value="1"/>
</dbReference>
<dbReference type="SMART" id="SM00088">
    <property type="entry name" value="PINT"/>
    <property type="match status" value="1"/>
</dbReference>
<dbReference type="SUPFAM" id="SSF46785">
    <property type="entry name" value="Winged helix' DNA-binding domain"/>
    <property type="match status" value="1"/>
</dbReference>
<dbReference type="PROSITE" id="PS50250">
    <property type="entry name" value="PCI"/>
    <property type="match status" value="1"/>
</dbReference>
<comment type="function">
    <text evidence="3">Component of the eukaryotic translation initiation factor 3 (eIF-3) complex, which is required for several steps in the initiation of protein synthesis. The eIF-3 complex associates with the 40S ribosome and facilitates the recruitment of eIF-1, eIF-1A, eIF-2:GTP:methionyl-tRNAi and eIF-5 to form the 43S pre-initiation complex (43S PIC). The eIF-3 complex stimulates mRNA recruitment to the 43S PIC and scanning of the mRNA for AUG recognition. The eIF-3 complex is also required for disassembly and recycling of post-termination ribosomal complexes and subsequently prevents premature joining of the 40S and 60S ribosomal subunits prior to initiation. The eIF-3 complex specifically targets and initiates translation of a subset of mRNAs involved in cell proliferation, including cell cycling, differentiation and apoptosis, and uses different modes of RNA stem-loop binding to exert either translational activation or repression. Required for nonsense-mediated mRNA decay (NMD); may act in conjunction with UPF2 to divert mRNAs from translation to the NMD pathway. May interact with MCM7 and EPAS1 and regulate the proteasome-mediated degradation of these proteins.</text>
</comment>
<comment type="subunit">
    <text evidence="1 3">Component of the eukaryotic translation initiation factor 3 (eIF-3) complex, which is composed of 13 subunits: EIF3A, EIF3B, EIF3C, EIF3D, EIF3E, EIF3F, EIF3G, EIF3H, EIF3I, EIF3J, EIF3K, EIF3L and EIF3M. The eIF-3 complex appears to include 3 stable modules: module A is composed of EIF3A, EIF3B, EIF3G and EIF3I; module B is composed of EIF3F, EIF3H, and EIF3M; and module C is composed of EIF3C, EIF3D, EIF3E, EIF3K and EIF3L. EIF3C of module C binds EIF3B of module A and EIF3H of module B, thereby linking the three modules. EIF3J is a labile subunit that binds to the eIF-3 complex via EIF3B. The eIF-3 complex interacts with RPS6KB1 under conditions of nutrient depletion. Mitogenic stimulation leads to binding and activation of a complex composed of MTOR and RPTOR, leading to phosphorylation and release of RPS6KB1 and binding of EIF4B to eIF-3. Interacts with COPS3, COPS6, COPS7 (COPS7A or COPS7B), EIF4G1, EPAS1, MCM7, NCBP1, PSMC6, TRIM27 and UPF2 (By similarity). Interacts with IFIT1 and IFIT2 (By similarity). Interacts with BZW2/5MP1 (By similarity).</text>
</comment>
<comment type="subcellular location">
    <subcellularLocation>
        <location evidence="3">Cytoplasm</location>
    </subcellularLocation>
    <subcellularLocation>
        <location evidence="3">Nucleus</location>
        <location evidence="3">PML body</location>
    </subcellularLocation>
</comment>
<comment type="similarity">
    <text evidence="3">Belongs to the eIF-3 subunit E family.</text>
</comment>
<evidence type="ECO:0000250" key="1">
    <source>
        <dbReference type="UniProtKB" id="P60228"/>
    </source>
</evidence>
<evidence type="ECO:0000250" key="2">
    <source>
        <dbReference type="UniProtKB" id="P60229"/>
    </source>
</evidence>
<evidence type="ECO:0000255" key="3">
    <source>
        <dbReference type="HAMAP-Rule" id="MF_03004"/>
    </source>
</evidence>
<evidence type="ECO:0000255" key="4">
    <source>
        <dbReference type="PROSITE-ProRule" id="PRU01185"/>
    </source>
</evidence>
<evidence type="ECO:0000305" key="5"/>
<sequence>MAEYDLTTRIAHFLDRHLVFPLLEFLSVKEIYNEKELLQGKLDLLSDTNMVDFAMDVYKNLYSDDIPHALREKRTTVVAQLKQLQAETEPIVKMFEDPETTRQMQSTRDGRMLFDYLADKHGFRQEYLDTLYRYAKFQYECGNYSGAAEYLYFFRVLVPATDRNALSSLWGKLASEILMQNWDAAMEDLTRLKETIDNNSVSSPLQSLQQRTWLIHWSLFVFFNHPKGRDNIIDLFLYQPQYLNAIQTMCPHILRYLTTAVITNKDVRKRRQVLKDLVKVIQQESYTYKDPITEFVECLYVNFDFDGAQKKLRECESVLVNDFFLVACLEDFIENARLFIFETFCRIHQCISINMLADKLNMTPEEAERWIVNLIRNARLDAKIDSKLGHVVMGNNAVSPYQQVIEKTKSLSFRSQMLAMNIEKKLNQNSRSEAPNWATQDSGFY</sequence>
<keyword id="KW-0007">Acetylation</keyword>
<keyword id="KW-0963">Cytoplasm</keyword>
<keyword id="KW-0396">Initiation factor</keyword>
<keyword id="KW-0539">Nucleus</keyword>
<keyword id="KW-0597">Phosphoprotein</keyword>
<keyword id="KW-0648">Protein biosynthesis</keyword>
<keyword id="KW-1185">Reference proteome</keyword>
<name>EIF3E_PONAB</name>